<evidence type="ECO:0000255" key="1">
    <source>
        <dbReference type="HAMAP-Rule" id="MF_00406"/>
    </source>
</evidence>
<organism>
    <name type="scientific">Staphylococcus aureus (strain USA300)</name>
    <dbReference type="NCBI Taxonomy" id="367830"/>
    <lineage>
        <taxon>Bacteria</taxon>
        <taxon>Bacillati</taxon>
        <taxon>Bacillota</taxon>
        <taxon>Bacilli</taxon>
        <taxon>Bacillales</taxon>
        <taxon>Staphylococcaceae</taxon>
        <taxon>Staphylococcus</taxon>
    </lineage>
</organism>
<accession>Q2FF28</accession>
<keyword id="KW-0963">Cytoplasm</keyword>
<keyword id="KW-0441">Lipid A biosynthesis</keyword>
<keyword id="KW-0444">Lipid biosynthesis</keyword>
<keyword id="KW-0443">Lipid metabolism</keyword>
<keyword id="KW-0456">Lyase</keyword>
<dbReference type="EC" id="4.2.1.59" evidence="1"/>
<dbReference type="EMBL" id="CP000255">
    <property type="protein sequence ID" value="ABD21749.1"/>
    <property type="molecule type" value="Genomic_DNA"/>
</dbReference>
<dbReference type="RefSeq" id="WP_000447678.1">
    <property type="nucleotide sequence ID" value="NZ_CP027476.1"/>
</dbReference>
<dbReference type="SMR" id="Q2FF28"/>
<dbReference type="KEGG" id="saa:SAUSA300_2054"/>
<dbReference type="HOGENOM" id="CLU_078912_3_0_9"/>
<dbReference type="OMA" id="FPGRPLM"/>
<dbReference type="Proteomes" id="UP000001939">
    <property type="component" value="Chromosome"/>
</dbReference>
<dbReference type="GO" id="GO:0005737">
    <property type="term" value="C:cytoplasm"/>
    <property type="evidence" value="ECO:0007669"/>
    <property type="project" value="UniProtKB-SubCell"/>
</dbReference>
<dbReference type="GO" id="GO:0016020">
    <property type="term" value="C:membrane"/>
    <property type="evidence" value="ECO:0007669"/>
    <property type="project" value="GOC"/>
</dbReference>
<dbReference type="GO" id="GO:0019171">
    <property type="term" value="F:(3R)-hydroxyacyl-[acyl-carrier-protein] dehydratase activity"/>
    <property type="evidence" value="ECO:0007669"/>
    <property type="project" value="UniProtKB-EC"/>
</dbReference>
<dbReference type="GO" id="GO:0006633">
    <property type="term" value="P:fatty acid biosynthetic process"/>
    <property type="evidence" value="ECO:0007669"/>
    <property type="project" value="UniProtKB-UniRule"/>
</dbReference>
<dbReference type="GO" id="GO:0009245">
    <property type="term" value="P:lipid A biosynthetic process"/>
    <property type="evidence" value="ECO:0007669"/>
    <property type="project" value="UniProtKB-UniRule"/>
</dbReference>
<dbReference type="CDD" id="cd01288">
    <property type="entry name" value="FabZ"/>
    <property type="match status" value="1"/>
</dbReference>
<dbReference type="FunFam" id="3.10.129.10:FF:000001">
    <property type="entry name" value="3-hydroxyacyl-[acyl-carrier-protein] dehydratase FabZ"/>
    <property type="match status" value="1"/>
</dbReference>
<dbReference type="Gene3D" id="3.10.129.10">
    <property type="entry name" value="Hotdog Thioesterase"/>
    <property type="match status" value="1"/>
</dbReference>
<dbReference type="HAMAP" id="MF_00406">
    <property type="entry name" value="FabZ"/>
    <property type="match status" value="1"/>
</dbReference>
<dbReference type="InterPro" id="IPR013114">
    <property type="entry name" value="FabA_FabZ"/>
</dbReference>
<dbReference type="InterPro" id="IPR010084">
    <property type="entry name" value="FabZ"/>
</dbReference>
<dbReference type="InterPro" id="IPR029069">
    <property type="entry name" value="HotDog_dom_sf"/>
</dbReference>
<dbReference type="NCBIfam" id="TIGR01750">
    <property type="entry name" value="fabZ"/>
    <property type="match status" value="1"/>
</dbReference>
<dbReference type="NCBIfam" id="NF000582">
    <property type="entry name" value="PRK00006.1"/>
    <property type="match status" value="1"/>
</dbReference>
<dbReference type="PANTHER" id="PTHR30272">
    <property type="entry name" value="3-HYDROXYACYL-[ACYL-CARRIER-PROTEIN] DEHYDRATASE"/>
    <property type="match status" value="1"/>
</dbReference>
<dbReference type="PANTHER" id="PTHR30272:SF1">
    <property type="entry name" value="3-HYDROXYACYL-[ACYL-CARRIER-PROTEIN] DEHYDRATASE"/>
    <property type="match status" value="1"/>
</dbReference>
<dbReference type="Pfam" id="PF07977">
    <property type="entry name" value="FabA"/>
    <property type="match status" value="1"/>
</dbReference>
<dbReference type="SUPFAM" id="SSF54637">
    <property type="entry name" value="Thioesterase/thiol ester dehydrase-isomerase"/>
    <property type="match status" value="1"/>
</dbReference>
<gene>
    <name evidence="1" type="primary">fabZ</name>
    <name type="ordered locus">SAUSA300_2054</name>
</gene>
<protein>
    <recommendedName>
        <fullName evidence="1">3-hydroxyacyl-[acyl-carrier-protein] dehydratase FabZ</fullName>
        <ecNumber evidence="1">4.2.1.59</ecNumber>
    </recommendedName>
    <alternativeName>
        <fullName evidence="1">(3R)-hydroxymyristoyl-[acyl-carrier-protein] dehydratase</fullName>
        <shortName evidence="1">(3R)-hydroxymyristoyl-ACP dehydrase</shortName>
    </alternativeName>
    <alternativeName>
        <fullName evidence="1">Beta-hydroxyacyl-ACP dehydratase</fullName>
    </alternativeName>
</protein>
<comment type="function">
    <text evidence="1">Involved in unsaturated fatty acids biosynthesis. Catalyzes the dehydration of short chain beta-hydroxyacyl-ACPs and long chain saturated and unsaturated beta-hydroxyacyl-ACPs.</text>
</comment>
<comment type="catalytic activity">
    <reaction evidence="1">
        <text>a (3R)-hydroxyacyl-[ACP] = a (2E)-enoyl-[ACP] + H2O</text>
        <dbReference type="Rhea" id="RHEA:13097"/>
        <dbReference type="Rhea" id="RHEA-COMP:9925"/>
        <dbReference type="Rhea" id="RHEA-COMP:9945"/>
        <dbReference type="ChEBI" id="CHEBI:15377"/>
        <dbReference type="ChEBI" id="CHEBI:78784"/>
        <dbReference type="ChEBI" id="CHEBI:78827"/>
        <dbReference type="EC" id="4.2.1.59"/>
    </reaction>
</comment>
<comment type="subcellular location">
    <subcellularLocation>
        <location evidence="1">Cytoplasm</location>
    </subcellularLocation>
</comment>
<comment type="similarity">
    <text evidence="1">Belongs to the thioester dehydratase family. FabZ subfamily.</text>
</comment>
<sequence>METIFDYNQIKQIIPHRQPFLLIDKVVEYEEGQRCVAIKQVSGNEPFFQGHFPEYAVMPGVLITEALAQTGAVAILNSEENKGKIALFAGIDKCRFKRQVVPGDTLTLEVEITKIKGPIGKGNAKATVDGQLACSCELTFAIQDVK</sequence>
<feature type="chain" id="PRO_0000242902" description="3-hydroxyacyl-[acyl-carrier-protein] dehydratase FabZ">
    <location>
        <begin position="1"/>
        <end position="146"/>
    </location>
</feature>
<feature type="active site" evidence="1">
    <location>
        <position position="51"/>
    </location>
</feature>
<proteinExistence type="inferred from homology"/>
<reference key="1">
    <citation type="journal article" date="2006" name="Lancet">
        <title>Complete genome sequence of USA300, an epidemic clone of community-acquired meticillin-resistant Staphylococcus aureus.</title>
        <authorList>
            <person name="Diep B.A."/>
            <person name="Gill S.R."/>
            <person name="Chang R.F."/>
            <person name="Phan T.H."/>
            <person name="Chen J.H."/>
            <person name="Davidson M.G."/>
            <person name="Lin F."/>
            <person name="Lin J."/>
            <person name="Carleton H.A."/>
            <person name="Mongodin E.F."/>
            <person name="Sensabaugh G.F."/>
            <person name="Perdreau-Remington F."/>
        </authorList>
    </citation>
    <scope>NUCLEOTIDE SEQUENCE [LARGE SCALE GENOMIC DNA]</scope>
    <source>
        <strain>USA300</strain>
    </source>
</reference>
<name>FABZ_STAA3</name>